<proteinExistence type="inferred from homology"/>
<name>RL2_GEOSM</name>
<evidence type="ECO:0000255" key="1">
    <source>
        <dbReference type="HAMAP-Rule" id="MF_01320"/>
    </source>
</evidence>
<evidence type="ECO:0000256" key="2">
    <source>
        <dbReference type="SAM" id="MobiDB-lite"/>
    </source>
</evidence>
<evidence type="ECO:0000305" key="3"/>
<reference key="1">
    <citation type="submission" date="2009-07" db="EMBL/GenBank/DDBJ databases">
        <title>Complete sequence of Geobacter sp. M21.</title>
        <authorList>
            <consortium name="US DOE Joint Genome Institute"/>
            <person name="Lucas S."/>
            <person name="Copeland A."/>
            <person name="Lapidus A."/>
            <person name="Glavina del Rio T."/>
            <person name="Dalin E."/>
            <person name="Tice H."/>
            <person name="Bruce D."/>
            <person name="Goodwin L."/>
            <person name="Pitluck S."/>
            <person name="Saunders E."/>
            <person name="Brettin T."/>
            <person name="Detter J.C."/>
            <person name="Han C."/>
            <person name="Larimer F."/>
            <person name="Land M."/>
            <person name="Hauser L."/>
            <person name="Kyrpides N."/>
            <person name="Ovchinnikova G."/>
            <person name="Lovley D."/>
        </authorList>
    </citation>
    <scope>NUCLEOTIDE SEQUENCE [LARGE SCALE GENOMIC DNA]</scope>
    <source>
        <strain>M21</strain>
    </source>
</reference>
<keyword id="KW-0687">Ribonucleoprotein</keyword>
<keyword id="KW-0689">Ribosomal protein</keyword>
<keyword id="KW-0694">RNA-binding</keyword>
<keyword id="KW-0699">rRNA-binding</keyword>
<organism>
    <name type="scientific">Geobacter sp. (strain M21)</name>
    <dbReference type="NCBI Taxonomy" id="443144"/>
    <lineage>
        <taxon>Bacteria</taxon>
        <taxon>Pseudomonadati</taxon>
        <taxon>Thermodesulfobacteriota</taxon>
        <taxon>Desulfuromonadia</taxon>
        <taxon>Geobacterales</taxon>
        <taxon>Geobacteraceae</taxon>
        <taxon>Geobacter</taxon>
    </lineage>
</organism>
<comment type="function">
    <text evidence="1">One of the primary rRNA binding proteins. Required for association of the 30S and 50S subunits to form the 70S ribosome, for tRNA binding and peptide bond formation. It has been suggested to have peptidyltransferase activity; this is somewhat controversial. Makes several contacts with the 16S rRNA in the 70S ribosome.</text>
</comment>
<comment type="subunit">
    <text evidence="1">Part of the 50S ribosomal subunit. Forms a bridge to the 30S subunit in the 70S ribosome.</text>
</comment>
<comment type="similarity">
    <text evidence="1">Belongs to the universal ribosomal protein uL2 family.</text>
</comment>
<protein>
    <recommendedName>
        <fullName evidence="1">Large ribosomal subunit protein uL2</fullName>
    </recommendedName>
    <alternativeName>
        <fullName evidence="3">50S ribosomal protein L2</fullName>
    </alternativeName>
</protein>
<sequence>MAIKTYKPTSPGRRAQTCSTFEEITACKPERSLVENLKKSGGRNSNGRITSRNVGGGHKQKYRIIDFRRDKTEIPAKVATIEYDPCRSARIALLNYADGEKRYILAPLSLKVGDTVISSEQADIKPGNALPIRCIPLGTIIHNIELKIGKGAQLARSAGTFAQLMAKEGKYGQVKLPSGEVRMILMDCKATIGQVGNVDHENVSIGKAGRSRWLGVRPHVRGVAMNPVDHPHGGGEGRTSGGRHPVTPWGIPTKGYKTRTNKRSTPFIVKKRTK</sequence>
<dbReference type="EMBL" id="CP001661">
    <property type="protein sequence ID" value="ACT19350.1"/>
    <property type="molecule type" value="Genomic_DNA"/>
</dbReference>
<dbReference type="SMR" id="C6E4Q4"/>
<dbReference type="STRING" id="443144.GM21_3325"/>
<dbReference type="KEGG" id="gem:GM21_3325"/>
<dbReference type="eggNOG" id="COG0090">
    <property type="taxonomic scope" value="Bacteria"/>
</dbReference>
<dbReference type="HOGENOM" id="CLU_036235_2_1_7"/>
<dbReference type="OrthoDB" id="9778722at2"/>
<dbReference type="GO" id="GO:0015934">
    <property type="term" value="C:large ribosomal subunit"/>
    <property type="evidence" value="ECO:0007669"/>
    <property type="project" value="InterPro"/>
</dbReference>
<dbReference type="GO" id="GO:0019843">
    <property type="term" value="F:rRNA binding"/>
    <property type="evidence" value="ECO:0007669"/>
    <property type="project" value="UniProtKB-UniRule"/>
</dbReference>
<dbReference type="GO" id="GO:0003735">
    <property type="term" value="F:structural constituent of ribosome"/>
    <property type="evidence" value="ECO:0007669"/>
    <property type="project" value="InterPro"/>
</dbReference>
<dbReference type="GO" id="GO:0016740">
    <property type="term" value="F:transferase activity"/>
    <property type="evidence" value="ECO:0007669"/>
    <property type="project" value="InterPro"/>
</dbReference>
<dbReference type="GO" id="GO:0002181">
    <property type="term" value="P:cytoplasmic translation"/>
    <property type="evidence" value="ECO:0007669"/>
    <property type="project" value="TreeGrafter"/>
</dbReference>
<dbReference type="FunFam" id="2.30.30.30:FF:000001">
    <property type="entry name" value="50S ribosomal protein L2"/>
    <property type="match status" value="1"/>
</dbReference>
<dbReference type="FunFam" id="2.40.50.140:FF:000003">
    <property type="entry name" value="50S ribosomal protein L2"/>
    <property type="match status" value="1"/>
</dbReference>
<dbReference type="FunFam" id="4.10.950.10:FF:000001">
    <property type="entry name" value="50S ribosomal protein L2"/>
    <property type="match status" value="1"/>
</dbReference>
<dbReference type="Gene3D" id="2.30.30.30">
    <property type="match status" value="1"/>
</dbReference>
<dbReference type="Gene3D" id="2.40.50.140">
    <property type="entry name" value="Nucleic acid-binding proteins"/>
    <property type="match status" value="1"/>
</dbReference>
<dbReference type="Gene3D" id="4.10.950.10">
    <property type="entry name" value="Ribosomal protein L2, domain 3"/>
    <property type="match status" value="1"/>
</dbReference>
<dbReference type="HAMAP" id="MF_01320_B">
    <property type="entry name" value="Ribosomal_uL2_B"/>
    <property type="match status" value="1"/>
</dbReference>
<dbReference type="InterPro" id="IPR012340">
    <property type="entry name" value="NA-bd_OB-fold"/>
</dbReference>
<dbReference type="InterPro" id="IPR014722">
    <property type="entry name" value="Rib_uL2_dom2"/>
</dbReference>
<dbReference type="InterPro" id="IPR002171">
    <property type="entry name" value="Ribosomal_uL2"/>
</dbReference>
<dbReference type="InterPro" id="IPR005880">
    <property type="entry name" value="Ribosomal_uL2_bac/org-type"/>
</dbReference>
<dbReference type="InterPro" id="IPR022669">
    <property type="entry name" value="Ribosomal_uL2_C"/>
</dbReference>
<dbReference type="InterPro" id="IPR022671">
    <property type="entry name" value="Ribosomal_uL2_CS"/>
</dbReference>
<dbReference type="InterPro" id="IPR014726">
    <property type="entry name" value="Ribosomal_uL2_dom3"/>
</dbReference>
<dbReference type="InterPro" id="IPR022666">
    <property type="entry name" value="Ribosomal_uL2_RNA-bd_dom"/>
</dbReference>
<dbReference type="InterPro" id="IPR008991">
    <property type="entry name" value="Translation_prot_SH3-like_sf"/>
</dbReference>
<dbReference type="NCBIfam" id="TIGR01171">
    <property type="entry name" value="rplB_bact"/>
    <property type="match status" value="1"/>
</dbReference>
<dbReference type="PANTHER" id="PTHR13691:SF5">
    <property type="entry name" value="LARGE RIBOSOMAL SUBUNIT PROTEIN UL2M"/>
    <property type="match status" value="1"/>
</dbReference>
<dbReference type="PANTHER" id="PTHR13691">
    <property type="entry name" value="RIBOSOMAL PROTEIN L2"/>
    <property type="match status" value="1"/>
</dbReference>
<dbReference type="Pfam" id="PF00181">
    <property type="entry name" value="Ribosomal_L2"/>
    <property type="match status" value="1"/>
</dbReference>
<dbReference type="Pfam" id="PF03947">
    <property type="entry name" value="Ribosomal_L2_C"/>
    <property type="match status" value="1"/>
</dbReference>
<dbReference type="PIRSF" id="PIRSF002158">
    <property type="entry name" value="Ribosomal_L2"/>
    <property type="match status" value="1"/>
</dbReference>
<dbReference type="SMART" id="SM01383">
    <property type="entry name" value="Ribosomal_L2"/>
    <property type="match status" value="1"/>
</dbReference>
<dbReference type="SMART" id="SM01382">
    <property type="entry name" value="Ribosomal_L2_C"/>
    <property type="match status" value="1"/>
</dbReference>
<dbReference type="SUPFAM" id="SSF50249">
    <property type="entry name" value="Nucleic acid-binding proteins"/>
    <property type="match status" value="1"/>
</dbReference>
<dbReference type="SUPFAM" id="SSF50104">
    <property type="entry name" value="Translation proteins SH3-like domain"/>
    <property type="match status" value="1"/>
</dbReference>
<dbReference type="PROSITE" id="PS00467">
    <property type="entry name" value="RIBOSOMAL_L2"/>
    <property type="match status" value="1"/>
</dbReference>
<gene>
    <name evidence="1" type="primary">rplB</name>
    <name type="ordered locus">GM21_3325</name>
</gene>
<feature type="chain" id="PRO_1000214448" description="Large ribosomal subunit protein uL2">
    <location>
        <begin position="1"/>
        <end position="274"/>
    </location>
</feature>
<feature type="region of interest" description="Disordered" evidence="2">
    <location>
        <begin position="224"/>
        <end position="259"/>
    </location>
</feature>
<accession>C6E4Q4</accession>